<reference key="1">
    <citation type="submission" date="2008-01" db="EMBL/GenBank/DDBJ databases">
        <title>Complete sequence of Pseudomonas putida GB-1.</title>
        <authorList>
            <consortium name="US DOE Joint Genome Institute"/>
            <person name="Copeland A."/>
            <person name="Lucas S."/>
            <person name="Lapidus A."/>
            <person name="Barry K."/>
            <person name="Glavina del Rio T."/>
            <person name="Dalin E."/>
            <person name="Tice H."/>
            <person name="Pitluck S."/>
            <person name="Bruce D."/>
            <person name="Goodwin L."/>
            <person name="Chertkov O."/>
            <person name="Brettin T."/>
            <person name="Detter J.C."/>
            <person name="Han C."/>
            <person name="Kuske C.R."/>
            <person name="Schmutz J."/>
            <person name="Larimer F."/>
            <person name="Land M."/>
            <person name="Hauser L."/>
            <person name="Kyrpides N."/>
            <person name="Kim E."/>
            <person name="McCarthy J.K."/>
            <person name="Richardson P."/>
        </authorList>
    </citation>
    <scope>NUCLEOTIDE SEQUENCE [LARGE SCALE GENOMIC DNA]</scope>
    <source>
        <strain>GB-1</strain>
    </source>
</reference>
<accession>B0KRI2</accession>
<proteinExistence type="inferred from homology"/>
<dbReference type="EMBL" id="CP000926">
    <property type="protein sequence ID" value="ABY96976.1"/>
    <property type="molecule type" value="Genomic_DNA"/>
</dbReference>
<dbReference type="RefSeq" id="WP_012270759.1">
    <property type="nucleotide sequence ID" value="NC_010322.1"/>
</dbReference>
<dbReference type="SMR" id="B0KRI2"/>
<dbReference type="KEGG" id="ppg:PputGB1_1068"/>
<dbReference type="eggNOG" id="COG0806">
    <property type="taxonomic scope" value="Bacteria"/>
</dbReference>
<dbReference type="HOGENOM" id="CLU_077636_1_0_6"/>
<dbReference type="Proteomes" id="UP000002157">
    <property type="component" value="Chromosome"/>
</dbReference>
<dbReference type="GO" id="GO:0005737">
    <property type="term" value="C:cytoplasm"/>
    <property type="evidence" value="ECO:0007669"/>
    <property type="project" value="UniProtKB-SubCell"/>
</dbReference>
<dbReference type="GO" id="GO:0005840">
    <property type="term" value="C:ribosome"/>
    <property type="evidence" value="ECO:0007669"/>
    <property type="project" value="InterPro"/>
</dbReference>
<dbReference type="GO" id="GO:0043022">
    <property type="term" value="F:ribosome binding"/>
    <property type="evidence" value="ECO:0007669"/>
    <property type="project" value="InterPro"/>
</dbReference>
<dbReference type="GO" id="GO:0042274">
    <property type="term" value="P:ribosomal small subunit biogenesis"/>
    <property type="evidence" value="ECO:0007669"/>
    <property type="project" value="UniProtKB-UniRule"/>
</dbReference>
<dbReference type="GO" id="GO:0006364">
    <property type="term" value="P:rRNA processing"/>
    <property type="evidence" value="ECO:0007669"/>
    <property type="project" value="UniProtKB-UniRule"/>
</dbReference>
<dbReference type="Gene3D" id="2.30.30.240">
    <property type="entry name" value="PRC-barrel domain"/>
    <property type="match status" value="1"/>
</dbReference>
<dbReference type="Gene3D" id="2.40.30.60">
    <property type="entry name" value="RimM"/>
    <property type="match status" value="1"/>
</dbReference>
<dbReference type="HAMAP" id="MF_00014">
    <property type="entry name" value="Ribosome_mat_RimM"/>
    <property type="match status" value="1"/>
</dbReference>
<dbReference type="InterPro" id="IPR011033">
    <property type="entry name" value="PRC_barrel-like_sf"/>
</dbReference>
<dbReference type="InterPro" id="IPR056792">
    <property type="entry name" value="PRC_RimM"/>
</dbReference>
<dbReference type="InterPro" id="IPR011961">
    <property type="entry name" value="RimM"/>
</dbReference>
<dbReference type="InterPro" id="IPR002676">
    <property type="entry name" value="RimM_N"/>
</dbReference>
<dbReference type="InterPro" id="IPR036976">
    <property type="entry name" value="RimM_N_sf"/>
</dbReference>
<dbReference type="InterPro" id="IPR009000">
    <property type="entry name" value="Transl_B-barrel_sf"/>
</dbReference>
<dbReference type="NCBIfam" id="TIGR02273">
    <property type="entry name" value="16S_RimM"/>
    <property type="match status" value="1"/>
</dbReference>
<dbReference type="PANTHER" id="PTHR33692">
    <property type="entry name" value="RIBOSOME MATURATION FACTOR RIMM"/>
    <property type="match status" value="1"/>
</dbReference>
<dbReference type="PANTHER" id="PTHR33692:SF1">
    <property type="entry name" value="RIBOSOME MATURATION FACTOR RIMM"/>
    <property type="match status" value="1"/>
</dbReference>
<dbReference type="Pfam" id="PF24986">
    <property type="entry name" value="PRC_RimM"/>
    <property type="match status" value="1"/>
</dbReference>
<dbReference type="Pfam" id="PF01782">
    <property type="entry name" value="RimM"/>
    <property type="match status" value="1"/>
</dbReference>
<dbReference type="SUPFAM" id="SSF50346">
    <property type="entry name" value="PRC-barrel domain"/>
    <property type="match status" value="1"/>
</dbReference>
<dbReference type="SUPFAM" id="SSF50447">
    <property type="entry name" value="Translation proteins"/>
    <property type="match status" value="1"/>
</dbReference>
<gene>
    <name evidence="1" type="primary">rimM</name>
    <name type="ordered locus">PputGB1_1068</name>
</gene>
<evidence type="ECO:0000255" key="1">
    <source>
        <dbReference type="HAMAP-Rule" id="MF_00014"/>
    </source>
</evidence>
<feature type="chain" id="PRO_1000074036" description="Ribosome maturation factor RimM">
    <location>
        <begin position="1"/>
        <end position="178"/>
    </location>
</feature>
<feature type="domain" description="PRC barrel" evidence="1">
    <location>
        <begin position="101"/>
        <end position="178"/>
    </location>
</feature>
<protein>
    <recommendedName>
        <fullName evidence="1">Ribosome maturation factor RimM</fullName>
    </recommendedName>
</protein>
<keyword id="KW-0143">Chaperone</keyword>
<keyword id="KW-0963">Cytoplasm</keyword>
<keyword id="KW-0690">Ribosome biogenesis</keyword>
<keyword id="KW-0698">rRNA processing</keyword>
<organism>
    <name type="scientific">Pseudomonas putida (strain GB-1)</name>
    <dbReference type="NCBI Taxonomy" id="76869"/>
    <lineage>
        <taxon>Bacteria</taxon>
        <taxon>Pseudomonadati</taxon>
        <taxon>Pseudomonadota</taxon>
        <taxon>Gammaproteobacteria</taxon>
        <taxon>Pseudomonadales</taxon>
        <taxon>Pseudomonadaceae</taxon>
        <taxon>Pseudomonas</taxon>
    </lineage>
</organism>
<name>RIMM_PSEPG</name>
<comment type="function">
    <text evidence="1">An accessory protein needed during the final step in the assembly of 30S ribosomal subunit, possibly for assembly of the head region. Essential for efficient processing of 16S rRNA. May be needed both before and after RbfA during the maturation of 16S rRNA. It has affinity for free ribosomal 30S subunits but not for 70S ribosomes.</text>
</comment>
<comment type="subunit">
    <text evidence="1">Binds ribosomal protein uS19.</text>
</comment>
<comment type="subcellular location">
    <subcellularLocation>
        <location evidence="1">Cytoplasm</location>
    </subcellularLocation>
</comment>
<comment type="domain">
    <text evidence="1">The PRC barrel domain binds ribosomal protein uS19.</text>
</comment>
<comment type="similarity">
    <text evidence="1">Belongs to the RimM family.</text>
</comment>
<sequence>MNATPEKADDLIVVGKIFSVHGVRGEVKVYSFTDPIENLLDYPRWTLRHEGKVKQVELVSGRGSQKGLVVKLKGLEDRDEARLLSGYEICIARSLLPNLAADEYYWYQLVGLKVINQDEHLFGKVDHLLETGANDVMVVKPCAGSLDDRERLLPYTAQCVLAIDLEAGVMRVEWDADF</sequence>